<sequence length="272" mass="30154">MYVWVQQPTALLLLALTLGVTARRLNCVKHTYPSGHKCCRECQPGHGMVSRCDHTRDTLCHPCETGFYNEAVNYDTCKQCTQCNHRSGSELKQNCTPTQDTVCRCRPGTQPRQDSGYKLGVDCVPCPPGHFSPGNNQACKPWTNCTLSGKQTRHPASDSLDAVCEDRSLLATLLWETQRPTFRPTTVQSTTVWPRTSELPSPPTLVTPEGPAFAVLLGLGLGLLAPLTVLLALYLLRKAWRLPNTPKPCWGNSFRTPIQEEHTDAHFTLAKI</sequence>
<keyword id="KW-1015">Disulfide bond</keyword>
<keyword id="KW-0325">Glycoprotein</keyword>
<keyword id="KW-0472">Membrane</keyword>
<keyword id="KW-0675">Receptor</keyword>
<keyword id="KW-1185">Reference proteome</keyword>
<keyword id="KW-0677">Repeat</keyword>
<keyword id="KW-0732">Signal</keyword>
<keyword id="KW-0812">Transmembrane</keyword>
<keyword id="KW-1133">Transmembrane helix</keyword>
<evidence type="ECO:0000250" key="1"/>
<evidence type="ECO:0000255" key="2"/>
<evidence type="ECO:0000255" key="3">
    <source>
        <dbReference type="PROSITE-ProRule" id="PRU00206"/>
    </source>
</evidence>
<evidence type="ECO:0000269" key="4">
    <source>
    </source>
</evidence>
<evidence type="ECO:0000305" key="5"/>
<organism>
    <name type="scientific">Mus musculus</name>
    <name type="common">Mouse</name>
    <dbReference type="NCBI Taxonomy" id="10090"/>
    <lineage>
        <taxon>Eukaryota</taxon>
        <taxon>Metazoa</taxon>
        <taxon>Chordata</taxon>
        <taxon>Craniata</taxon>
        <taxon>Vertebrata</taxon>
        <taxon>Euteleostomi</taxon>
        <taxon>Mammalia</taxon>
        <taxon>Eutheria</taxon>
        <taxon>Euarchontoglires</taxon>
        <taxon>Glires</taxon>
        <taxon>Rodentia</taxon>
        <taxon>Myomorpha</taxon>
        <taxon>Muroidea</taxon>
        <taxon>Muridae</taxon>
        <taxon>Murinae</taxon>
        <taxon>Mus</taxon>
        <taxon>Mus</taxon>
    </lineage>
</organism>
<feature type="signal peptide" evidence="2">
    <location>
        <begin position="1"/>
        <end position="19"/>
    </location>
</feature>
<feature type="chain" id="PRO_0000034555" description="Tumor necrosis factor receptor superfamily member 4">
    <location>
        <begin position="20"/>
        <end position="272"/>
    </location>
</feature>
<feature type="topological domain" description="Extracellular" evidence="2">
    <location>
        <begin position="20"/>
        <end position="211"/>
    </location>
</feature>
<feature type="transmembrane region" description="Helical" evidence="2">
    <location>
        <begin position="212"/>
        <end position="236"/>
    </location>
</feature>
<feature type="topological domain" description="Cytoplasmic" evidence="2">
    <location>
        <begin position="237"/>
        <end position="272"/>
    </location>
</feature>
<feature type="repeat" description="TNFR-Cys 1">
    <location>
        <begin position="26"/>
        <end position="61"/>
    </location>
</feature>
<feature type="repeat" description="TNFR-Cys 2">
    <location>
        <begin position="62"/>
        <end position="103"/>
    </location>
</feature>
<feature type="repeat" description="TNFR-Cys 3; truncated">
    <location>
        <begin position="104"/>
        <end position="124"/>
    </location>
</feature>
<feature type="repeat" description="TNFR-Cys 4">
    <location>
        <begin position="125"/>
        <end position="165"/>
    </location>
</feature>
<feature type="glycosylation site" description="N-linked (GlcNAc...) asparagine" evidence="2">
    <location>
        <position position="144"/>
    </location>
</feature>
<feature type="disulfide bond" evidence="3">
    <location>
        <begin position="27"/>
        <end position="38"/>
    </location>
</feature>
<feature type="disulfide bond" evidence="3">
    <location>
        <begin position="39"/>
        <end position="52"/>
    </location>
</feature>
<feature type="disulfide bond" evidence="3">
    <location>
        <begin position="42"/>
        <end position="60"/>
    </location>
</feature>
<feature type="disulfide bond" evidence="3">
    <location>
        <begin position="63"/>
        <end position="77"/>
    </location>
</feature>
<feature type="disulfide bond" evidence="3">
    <location>
        <begin position="80"/>
        <end position="95"/>
    </location>
</feature>
<feature type="disulfide bond" evidence="3">
    <location>
        <begin position="83"/>
        <end position="103"/>
    </location>
</feature>
<feature type="disulfide bond" evidence="3">
    <location>
        <begin position="105"/>
        <end position="123"/>
    </location>
</feature>
<feature type="disulfide bond" evidence="3">
    <location>
        <begin position="126"/>
        <end position="139"/>
    </location>
</feature>
<feature type="disulfide bond" evidence="3">
    <location>
        <begin position="145"/>
        <end position="164"/>
    </location>
</feature>
<feature type="sequence conflict" description="In Ref. 2; CAA59476." evidence="5" ref="2">
    <original>A</original>
    <variation>G</variation>
    <location>
        <position position="15"/>
    </location>
</feature>
<gene>
    <name type="primary">Tnfrsf4</name>
    <name type="synonym">Ox40</name>
    <name type="synonym">Txgp1</name>
</gene>
<name>TNR4_MOUSE</name>
<protein>
    <recommendedName>
        <fullName>Tumor necrosis factor receptor superfamily member 4</fullName>
    </recommendedName>
    <alternativeName>
        <fullName>OX40 antigen</fullName>
    </alternativeName>
    <alternativeName>
        <fullName>OX40L receptor</fullName>
    </alternativeName>
    <cdAntigenName>CD134</cdAntigenName>
</protein>
<dbReference type="EMBL" id="Z21674">
    <property type="protein sequence ID" value="CAA79772.1"/>
    <property type="molecule type" value="mRNA"/>
</dbReference>
<dbReference type="EMBL" id="X85214">
    <property type="protein sequence ID" value="CAA59476.1"/>
    <property type="molecule type" value="Genomic_DNA"/>
</dbReference>
<dbReference type="CCDS" id="CCDS19055.1"/>
<dbReference type="PIR" id="I48700">
    <property type="entry name" value="I48700"/>
</dbReference>
<dbReference type="RefSeq" id="NP_035789.1">
    <property type="nucleotide sequence ID" value="NM_011659.2"/>
</dbReference>
<dbReference type="SMR" id="P47741"/>
<dbReference type="BioGRID" id="204386">
    <property type="interactions" value="1"/>
</dbReference>
<dbReference type="DIP" id="DIP-6239N"/>
<dbReference type="FunCoup" id="P47741">
    <property type="interactions" value="451"/>
</dbReference>
<dbReference type="IntAct" id="P47741">
    <property type="interactions" value="13"/>
</dbReference>
<dbReference type="STRING" id="10090.ENSMUSP00000030952"/>
<dbReference type="GlyCosmos" id="P47741">
    <property type="glycosylation" value="1 site, No reported glycans"/>
</dbReference>
<dbReference type="GlyGen" id="P47741">
    <property type="glycosylation" value="2 sites, 1 N-linked glycan (1 site)"/>
</dbReference>
<dbReference type="PhosphoSitePlus" id="P47741"/>
<dbReference type="PaxDb" id="10090-ENSMUSP00000030952"/>
<dbReference type="DNASU" id="22163"/>
<dbReference type="GeneID" id="22163"/>
<dbReference type="KEGG" id="mmu:22163"/>
<dbReference type="AGR" id="MGI:104512"/>
<dbReference type="CTD" id="7293"/>
<dbReference type="MGI" id="MGI:104512">
    <property type="gene designation" value="Tnfrsf4"/>
</dbReference>
<dbReference type="eggNOG" id="ENOG502SB1F">
    <property type="taxonomic scope" value="Eukaryota"/>
</dbReference>
<dbReference type="InParanoid" id="P47741"/>
<dbReference type="OrthoDB" id="9950067at2759"/>
<dbReference type="PhylomeDB" id="P47741"/>
<dbReference type="Reactome" id="R-MMU-5669034">
    <property type="pathway name" value="TNFs bind their physiological receptors"/>
</dbReference>
<dbReference type="BioGRID-ORCS" id="22163">
    <property type="hits" value="6 hits in 82 CRISPR screens"/>
</dbReference>
<dbReference type="PRO" id="PR:P47741"/>
<dbReference type="Proteomes" id="UP000000589">
    <property type="component" value="Unplaced"/>
</dbReference>
<dbReference type="RNAct" id="P47741">
    <property type="molecule type" value="protein"/>
</dbReference>
<dbReference type="GO" id="GO:0009897">
    <property type="term" value="C:external side of plasma membrane"/>
    <property type="evidence" value="ECO:0000314"/>
    <property type="project" value="MGI"/>
</dbReference>
<dbReference type="GO" id="GO:0005886">
    <property type="term" value="C:plasma membrane"/>
    <property type="evidence" value="ECO:0000314"/>
    <property type="project" value="MGI"/>
</dbReference>
<dbReference type="GO" id="GO:0005031">
    <property type="term" value="F:tumor necrosis factor receptor activity"/>
    <property type="evidence" value="ECO:0000353"/>
    <property type="project" value="MGI"/>
</dbReference>
<dbReference type="GO" id="GO:0006968">
    <property type="term" value="P:cellular defense response"/>
    <property type="evidence" value="ECO:0000315"/>
    <property type="project" value="MGI"/>
</dbReference>
<dbReference type="GO" id="GO:0006954">
    <property type="term" value="P:inflammatory response"/>
    <property type="evidence" value="ECO:0000315"/>
    <property type="project" value="MGI"/>
</dbReference>
<dbReference type="GO" id="GO:0070236">
    <property type="term" value="P:negative regulation of activation-induced cell death of T cells"/>
    <property type="evidence" value="ECO:0000315"/>
    <property type="project" value="BHF-UCL"/>
</dbReference>
<dbReference type="GO" id="GO:0001818">
    <property type="term" value="P:negative regulation of cytokine production"/>
    <property type="evidence" value="ECO:0000353"/>
    <property type="project" value="MGI"/>
</dbReference>
<dbReference type="GO" id="GO:0043433">
    <property type="term" value="P:negative regulation of DNA-binding transcription factor activity"/>
    <property type="evidence" value="ECO:0000314"/>
    <property type="project" value="BHF-UCL"/>
</dbReference>
<dbReference type="GO" id="GO:0045892">
    <property type="term" value="P:negative regulation of DNA-templated transcription"/>
    <property type="evidence" value="ECO:0000314"/>
    <property type="project" value="BHF-UCL"/>
</dbReference>
<dbReference type="GO" id="GO:2001237">
    <property type="term" value="P:negative regulation of extrinsic apoptotic signaling pathway"/>
    <property type="evidence" value="ECO:0000315"/>
    <property type="project" value="BHF-UCL"/>
</dbReference>
<dbReference type="GO" id="GO:0030890">
    <property type="term" value="P:positive regulation of B cell proliferation"/>
    <property type="evidence" value="ECO:0000315"/>
    <property type="project" value="BHF-UCL"/>
</dbReference>
<dbReference type="GO" id="GO:0002639">
    <property type="term" value="P:positive regulation of immunoglobulin production"/>
    <property type="evidence" value="ECO:0000314"/>
    <property type="project" value="BHF-UCL"/>
</dbReference>
<dbReference type="GO" id="GO:0042981">
    <property type="term" value="P:regulation of apoptotic process"/>
    <property type="evidence" value="ECO:0000315"/>
    <property type="project" value="MGI"/>
</dbReference>
<dbReference type="CDD" id="cd13406">
    <property type="entry name" value="TNFRSF4"/>
    <property type="match status" value="1"/>
</dbReference>
<dbReference type="FunFam" id="2.10.50.10:FF:000026">
    <property type="entry name" value="Tumor necrosis factor receptor superfamily member 4"/>
    <property type="match status" value="1"/>
</dbReference>
<dbReference type="FunFam" id="2.10.50.10:FF:000038">
    <property type="entry name" value="Tumor necrosis factor receptor superfamily member 4"/>
    <property type="match status" value="1"/>
</dbReference>
<dbReference type="Gene3D" id="2.10.50.10">
    <property type="entry name" value="Tumor Necrosis Factor Receptor, subunit A, domain 2"/>
    <property type="match status" value="2"/>
</dbReference>
<dbReference type="InterPro" id="IPR001368">
    <property type="entry name" value="TNFR/NGFR_Cys_rich_reg"/>
</dbReference>
<dbReference type="InterPro" id="IPR020445">
    <property type="entry name" value="TNFR_4"/>
</dbReference>
<dbReference type="InterPro" id="IPR034022">
    <property type="entry name" value="TNFRSF4_N"/>
</dbReference>
<dbReference type="PANTHER" id="PTHR47881">
    <property type="entry name" value="TUMOR NECROSIS FACTOR RECEPTOR SUBFAMILY MEMBER 4"/>
    <property type="match status" value="1"/>
</dbReference>
<dbReference type="PANTHER" id="PTHR47881:SF1">
    <property type="entry name" value="TUMOR NECROSIS FACTOR RECEPTOR SUPERFAMILY MEMBER 4"/>
    <property type="match status" value="1"/>
</dbReference>
<dbReference type="Pfam" id="PF00020">
    <property type="entry name" value="TNFR_c6"/>
    <property type="match status" value="2"/>
</dbReference>
<dbReference type="PRINTS" id="PR01921">
    <property type="entry name" value="TNFACTORR4"/>
</dbReference>
<dbReference type="SMART" id="SM01411">
    <property type="entry name" value="Ephrin_rec_like"/>
    <property type="match status" value="2"/>
</dbReference>
<dbReference type="SMART" id="SM00208">
    <property type="entry name" value="TNFR"/>
    <property type="match status" value="3"/>
</dbReference>
<dbReference type="SUPFAM" id="SSF57586">
    <property type="entry name" value="TNF receptor-like"/>
    <property type="match status" value="3"/>
</dbReference>
<dbReference type="PROSITE" id="PS00652">
    <property type="entry name" value="TNFR_NGFR_1"/>
    <property type="match status" value="2"/>
</dbReference>
<dbReference type="PROSITE" id="PS50050">
    <property type="entry name" value="TNFR_NGFR_2"/>
    <property type="match status" value="2"/>
</dbReference>
<proteinExistence type="evidence at protein level"/>
<comment type="function">
    <text evidence="1">Receptor for TNFSF4/OX40L/GP34. Is a costimulatory molecule implicated in long-term T-cell immunity (By similarity).</text>
</comment>
<comment type="subunit">
    <text evidence="1">Interacts with TRAF2, TRAF3 and TRAF5.</text>
</comment>
<comment type="interaction">
    <interactant intactId="EBI-520001">
        <id>P47741</id>
    </interactant>
    <interactant intactId="EBI-520016">
        <id>P39429</id>
        <label>Traf2</label>
    </interactant>
    <organismsDiffer>false</organismsDiffer>
    <experiments>12</experiments>
</comment>
<comment type="interaction">
    <interactant intactId="EBI-520001">
        <id>P47741</id>
    </interactant>
    <interactant intactId="EBI-413074">
        <id>P62991</id>
        <label>Ubc</label>
    </interactant>
    <organismsDiffer>false</organismsDiffer>
    <experiments>3</experiments>
</comment>
<comment type="subcellular location">
    <subcellularLocation>
        <location>Membrane</location>
        <topology>Single-pass type I membrane protein</topology>
    </subcellularLocation>
</comment>
<comment type="tissue specificity">
    <text evidence="4">Expressed in CD4(+) T-cells and in T-helper Th17 cells (at protein level).</text>
</comment>
<comment type="induction">
    <text evidence="4">By IL6/STAT3 signaling in T-helper Th17 cells.</text>
</comment>
<reference key="1">
    <citation type="journal article" date="1993" name="J. Immunol.">
        <title>Cloning of mouse Ox40: a T cell activation marker that may mediate T-B cell interactions.</title>
        <authorList>
            <person name="Calderhead D.M."/>
            <person name="Buhlmann J.E."/>
            <person name="van den Eertwegh A.J."/>
            <person name="Claassen E."/>
            <person name="Noelle R.J."/>
            <person name="Fell H."/>
        </authorList>
    </citation>
    <scope>NUCLEOTIDE SEQUENCE [MRNA]</scope>
    <source>
        <strain>BALB/cJ</strain>
    </source>
</reference>
<reference key="2">
    <citation type="journal article" date="1995" name="Eur. J. Immunol.">
        <title>Gene structure and chromosomal localization of the mouse homologue of rat OX40 protein.</title>
        <authorList>
            <person name="Birkeland M.L."/>
            <person name="Copeland N.G."/>
            <person name="Gilbert D.J."/>
            <person name="Jenkins N.A."/>
            <person name="Barclay A.N."/>
        </authorList>
    </citation>
    <scope>NUCLEOTIDE SEQUENCE [GENOMIC DNA]</scope>
</reference>
<reference key="3">
    <citation type="journal article" date="2018" name="Eur. J. Immunol.">
        <title>Arid5a stabilizes OX40 mRNA in murine CD4+ T cells by recognizing a stem-loop structure in its 3'UTR.</title>
        <authorList>
            <person name="Hanieh H."/>
            <person name="Masuda K."/>
            <person name="Metwally H."/>
            <person name="Chalise J.P."/>
            <person name="Mohamed M."/>
            <person name="Nyati K.K."/>
            <person name="Standley D.M."/>
            <person name="Li S."/>
            <person name="Higa M."/>
            <person name="Zaman M.M."/>
            <person name="Kishimoto T."/>
        </authorList>
    </citation>
    <scope>TISSUE SPECIFICITY</scope>
    <scope>INDUCTION</scope>
</reference>
<accession>P47741</accession>